<keyword id="KW-0963">Cytoplasm</keyword>
<keyword id="KW-0413">Isomerase</keyword>
<keyword id="KW-0627">Porphyrin biosynthesis</keyword>
<keyword id="KW-0663">Pyridoxal phosphate</keyword>
<organism>
    <name type="scientific">Anaeromyxobacter sp. (strain K)</name>
    <dbReference type="NCBI Taxonomy" id="447217"/>
    <lineage>
        <taxon>Bacteria</taxon>
        <taxon>Pseudomonadati</taxon>
        <taxon>Myxococcota</taxon>
        <taxon>Myxococcia</taxon>
        <taxon>Myxococcales</taxon>
        <taxon>Cystobacterineae</taxon>
        <taxon>Anaeromyxobacteraceae</taxon>
        <taxon>Anaeromyxobacter</taxon>
    </lineage>
</organism>
<comment type="catalytic activity">
    <reaction evidence="1">
        <text>(S)-4-amino-5-oxopentanoate = 5-aminolevulinate</text>
        <dbReference type="Rhea" id="RHEA:14265"/>
        <dbReference type="ChEBI" id="CHEBI:57501"/>
        <dbReference type="ChEBI" id="CHEBI:356416"/>
        <dbReference type="EC" id="5.4.3.8"/>
    </reaction>
</comment>
<comment type="cofactor">
    <cofactor evidence="1">
        <name>pyridoxal 5'-phosphate</name>
        <dbReference type="ChEBI" id="CHEBI:597326"/>
    </cofactor>
</comment>
<comment type="pathway">
    <text evidence="1">Porphyrin-containing compound metabolism; protoporphyrin-IX biosynthesis; 5-aminolevulinate from L-glutamyl-tRNA(Glu): step 2/2.</text>
</comment>
<comment type="subunit">
    <text evidence="1">Homodimer.</text>
</comment>
<comment type="subcellular location">
    <subcellularLocation>
        <location evidence="1">Cytoplasm</location>
    </subcellularLocation>
</comment>
<comment type="similarity">
    <text evidence="1">Belongs to the class-III pyridoxal-phosphate-dependent aminotransferase family. HemL subfamily.</text>
</comment>
<evidence type="ECO:0000255" key="1">
    <source>
        <dbReference type="HAMAP-Rule" id="MF_00375"/>
    </source>
</evidence>
<proteinExistence type="inferred from homology"/>
<dbReference type="EC" id="5.4.3.8" evidence="1"/>
<dbReference type="EMBL" id="CP001131">
    <property type="protein sequence ID" value="ACG75682.1"/>
    <property type="molecule type" value="Genomic_DNA"/>
</dbReference>
<dbReference type="RefSeq" id="WP_012528425.1">
    <property type="nucleotide sequence ID" value="NC_011145.1"/>
</dbReference>
<dbReference type="SMR" id="B4UKE6"/>
<dbReference type="KEGG" id="ank:AnaeK_4480"/>
<dbReference type="HOGENOM" id="CLU_016922_1_5_7"/>
<dbReference type="OrthoDB" id="9801052at2"/>
<dbReference type="UniPathway" id="UPA00251">
    <property type="reaction ID" value="UER00317"/>
</dbReference>
<dbReference type="Proteomes" id="UP000001871">
    <property type="component" value="Chromosome"/>
</dbReference>
<dbReference type="GO" id="GO:0005737">
    <property type="term" value="C:cytoplasm"/>
    <property type="evidence" value="ECO:0007669"/>
    <property type="project" value="UniProtKB-SubCell"/>
</dbReference>
<dbReference type="GO" id="GO:0042286">
    <property type="term" value="F:glutamate-1-semialdehyde 2,1-aminomutase activity"/>
    <property type="evidence" value="ECO:0007669"/>
    <property type="project" value="UniProtKB-UniRule"/>
</dbReference>
<dbReference type="GO" id="GO:0030170">
    <property type="term" value="F:pyridoxal phosphate binding"/>
    <property type="evidence" value="ECO:0007669"/>
    <property type="project" value="InterPro"/>
</dbReference>
<dbReference type="GO" id="GO:0008483">
    <property type="term" value="F:transaminase activity"/>
    <property type="evidence" value="ECO:0007669"/>
    <property type="project" value="InterPro"/>
</dbReference>
<dbReference type="GO" id="GO:0006782">
    <property type="term" value="P:protoporphyrinogen IX biosynthetic process"/>
    <property type="evidence" value="ECO:0007669"/>
    <property type="project" value="UniProtKB-UniRule"/>
</dbReference>
<dbReference type="CDD" id="cd00610">
    <property type="entry name" value="OAT_like"/>
    <property type="match status" value="1"/>
</dbReference>
<dbReference type="FunFam" id="3.40.640.10:FF:000021">
    <property type="entry name" value="Glutamate-1-semialdehyde 2,1-aminomutase"/>
    <property type="match status" value="1"/>
</dbReference>
<dbReference type="Gene3D" id="3.90.1150.10">
    <property type="entry name" value="Aspartate Aminotransferase, domain 1"/>
    <property type="match status" value="1"/>
</dbReference>
<dbReference type="Gene3D" id="3.40.640.10">
    <property type="entry name" value="Type I PLP-dependent aspartate aminotransferase-like (Major domain)"/>
    <property type="match status" value="1"/>
</dbReference>
<dbReference type="HAMAP" id="MF_00375">
    <property type="entry name" value="HemL_aminotrans_3"/>
    <property type="match status" value="1"/>
</dbReference>
<dbReference type="InterPro" id="IPR004639">
    <property type="entry name" value="4pyrrol_synth_GluAld_NH2Trfase"/>
</dbReference>
<dbReference type="InterPro" id="IPR005814">
    <property type="entry name" value="Aminotrans_3"/>
</dbReference>
<dbReference type="InterPro" id="IPR049704">
    <property type="entry name" value="Aminotrans_3_PPA_site"/>
</dbReference>
<dbReference type="InterPro" id="IPR015424">
    <property type="entry name" value="PyrdxlP-dep_Trfase"/>
</dbReference>
<dbReference type="InterPro" id="IPR015421">
    <property type="entry name" value="PyrdxlP-dep_Trfase_major"/>
</dbReference>
<dbReference type="InterPro" id="IPR015422">
    <property type="entry name" value="PyrdxlP-dep_Trfase_small"/>
</dbReference>
<dbReference type="NCBIfam" id="TIGR00713">
    <property type="entry name" value="hemL"/>
    <property type="match status" value="1"/>
</dbReference>
<dbReference type="NCBIfam" id="NF000818">
    <property type="entry name" value="PRK00062.1"/>
    <property type="match status" value="1"/>
</dbReference>
<dbReference type="PANTHER" id="PTHR43713">
    <property type="entry name" value="GLUTAMATE-1-SEMIALDEHYDE 2,1-AMINOMUTASE"/>
    <property type="match status" value="1"/>
</dbReference>
<dbReference type="PANTHER" id="PTHR43713:SF3">
    <property type="entry name" value="GLUTAMATE-1-SEMIALDEHYDE 2,1-AMINOMUTASE 1, CHLOROPLASTIC-RELATED"/>
    <property type="match status" value="1"/>
</dbReference>
<dbReference type="Pfam" id="PF00202">
    <property type="entry name" value="Aminotran_3"/>
    <property type="match status" value="1"/>
</dbReference>
<dbReference type="SUPFAM" id="SSF53383">
    <property type="entry name" value="PLP-dependent transferases"/>
    <property type="match status" value="1"/>
</dbReference>
<dbReference type="PROSITE" id="PS00600">
    <property type="entry name" value="AA_TRANSFER_CLASS_3"/>
    <property type="match status" value="1"/>
</dbReference>
<name>GSA_ANASK</name>
<feature type="chain" id="PRO_1000121856" description="Glutamate-1-semialdehyde 2,1-aminomutase">
    <location>
        <begin position="1"/>
        <end position="430"/>
    </location>
</feature>
<feature type="modified residue" description="N6-(pyridoxal phosphate)lysine" evidence="1">
    <location>
        <position position="267"/>
    </location>
</feature>
<sequence>MKTELSQKLFEKANDLFPGGVNSPVRAFKGVGGTPRFISRAKGSHIFDVDGNDYVDYVLSWGPMIVGHCHPEVMREVQDAMKEGSSFGAPSPREILLAELVRERMPWVEKMRFVSSGTEATTSAIRVARGFTGRDDIVKFDGCYHGAGDPLLVKAGSGVETLGLPDSPGVPADVARHTLTAPYNDLPALEQVFQAKGASIAAVILEPVVGNMGVLVPRPGFLQGVHDLCRKHGALFIVDEVMTGFRLSSGGACGLYGLRPDLVTFGKVIGAGLPVGAFGGRRDVMDRVAPAGPIYQAGTLSGNPMAMAAGHAALKLMTEAAYRKLEALSAALAEGLQAAAAEAKVPVQVNRVGSMLTVFFSDRPVFDAASARACNTRRFGAFFHAMLEHGAYLPPSQFEAAFLSTAHTDDDVARTVAAARLAFAEAAKVA</sequence>
<accession>B4UKE6</accession>
<gene>
    <name evidence="1" type="primary">hemL</name>
    <name type="ordered locus">AnaeK_4480</name>
</gene>
<reference key="1">
    <citation type="submission" date="2008-08" db="EMBL/GenBank/DDBJ databases">
        <title>Complete sequence of Anaeromyxobacter sp. K.</title>
        <authorList>
            <consortium name="US DOE Joint Genome Institute"/>
            <person name="Lucas S."/>
            <person name="Copeland A."/>
            <person name="Lapidus A."/>
            <person name="Glavina del Rio T."/>
            <person name="Dalin E."/>
            <person name="Tice H."/>
            <person name="Bruce D."/>
            <person name="Goodwin L."/>
            <person name="Pitluck S."/>
            <person name="Saunders E."/>
            <person name="Brettin T."/>
            <person name="Detter J.C."/>
            <person name="Han C."/>
            <person name="Larimer F."/>
            <person name="Land M."/>
            <person name="Hauser L."/>
            <person name="Kyrpides N."/>
            <person name="Ovchinnikiva G."/>
            <person name="Beliaev A."/>
        </authorList>
    </citation>
    <scope>NUCLEOTIDE SEQUENCE [LARGE SCALE GENOMIC DNA]</scope>
    <source>
        <strain>K</strain>
    </source>
</reference>
<protein>
    <recommendedName>
        <fullName evidence="1">Glutamate-1-semialdehyde 2,1-aminomutase</fullName>
        <shortName evidence="1">GSA</shortName>
        <ecNumber evidence="1">5.4.3.8</ecNumber>
    </recommendedName>
    <alternativeName>
        <fullName evidence="1">Glutamate-1-semialdehyde aminotransferase</fullName>
        <shortName evidence="1">GSA-AT</shortName>
    </alternativeName>
</protein>